<sequence>MSAIKVFILSDSIGETAHNVALAAAAQFSDYDIRYQRFPFVRTDSLLQTVLSQALKEHAAIFHTFVDRRLSQIVNQFCEAHELPYYDVITPALDTFSQITHVQPSNHPGTVHALNTNYFDRINAIEFAVTYDDGKNPSGFLEADVVLLGVSRTSKTPLSLYLANRNLKVANLPLVPQAQIPDEIWKVDPKKIFGLTNDPEKLNDIRRQRMVQYGLNPDTMYSNTDKIKAELEYADKIFKKIGCLVINVANKSIEETATLITESLNTDDTNNG</sequence>
<protein>
    <recommendedName>
        <fullName evidence="1">Putative pyruvate, phosphate dikinase regulatory protein</fullName>
        <shortName evidence="1">PPDK regulatory protein</shortName>
        <ecNumber evidence="1">2.7.11.32</ecNumber>
        <ecNumber evidence="1">2.7.4.27</ecNumber>
    </recommendedName>
</protein>
<proteinExistence type="inferred from homology"/>
<name>PDRP_LACPL</name>
<gene>
    <name type="ordered locus">lp_1974</name>
</gene>
<feature type="chain" id="PRO_0000196667" description="Putative pyruvate, phosphate dikinase regulatory protein">
    <location>
        <begin position="1"/>
        <end position="272"/>
    </location>
</feature>
<feature type="binding site" evidence="1">
    <location>
        <begin position="149"/>
        <end position="156"/>
    </location>
    <ligand>
        <name>ADP</name>
        <dbReference type="ChEBI" id="CHEBI:456216"/>
    </ligand>
</feature>
<keyword id="KW-0418">Kinase</keyword>
<keyword id="KW-0547">Nucleotide-binding</keyword>
<keyword id="KW-1185">Reference proteome</keyword>
<keyword id="KW-0723">Serine/threonine-protein kinase</keyword>
<keyword id="KW-0808">Transferase</keyword>
<reference key="1">
    <citation type="journal article" date="2003" name="Proc. Natl. Acad. Sci. U.S.A.">
        <title>Complete genome sequence of Lactobacillus plantarum WCFS1.</title>
        <authorList>
            <person name="Kleerebezem M."/>
            <person name="Boekhorst J."/>
            <person name="van Kranenburg R."/>
            <person name="Molenaar D."/>
            <person name="Kuipers O.P."/>
            <person name="Leer R."/>
            <person name="Tarchini R."/>
            <person name="Peters S.A."/>
            <person name="Sandbrink H.M."/>
            <person name="Fiers M.W.E.J."/>
            <person name="Stiekema W."/>
            <person name="Klein Lankhorst R.M."/>
            <person name="Bron P.A."/>
            <person name="Hoffer S.M."/>
            <person name="Nierop Groot M.N."/>
            <person name="Kerkhoven R."/>
            <person name="De Vries M."/>
            <person name="Ursing B."/>
            <person name="De Vos W.M."/>
            <person name="Siezen R.J."/>
        </authorList>
    </citation>
    <scope>NUCLEOTIDE SEQUENCE [LARGE SCALE GENOMIC DNA]</scope>
    <source>
        <strain>ATCC BAA-793 / NCIMB 8826 / WCFS1</strain>
    </source>
</reference>
<reference key="2">
    <citation type="journal article" date="2012" name="J. Bacteriol.">
        <title>Complete resequencing and reannotation of the Lactobacillus plantarum WCFS1 genome.</title>
        <authorList>
            <person name="Siezen R.J."/>
            <person name="Francke C."/>
            <person name="Renckens B."/>
            <person name="Boekhorst J."/>
            <person name="Wels M."/>
            <person name="Kleerebezem M."/>
            <person name="van Hijum S.A."/>
        </authorList>
    </citation>
    <scope>NUCLEOTIDE SEQUENCE [LARGE SCALE GENOMIC DNA]</scope>
    <scope>GENOME REANNOTATION</scope>
    <source>
        <strain>ATCC BAA-793 / NCIMB 8826 / WCFS1</strain>
    </source>
</reference>
<evidence type="ECO:0000255" key="1">
    <source>
        <dbReference type="HAMAP-Rule" id="MF_00921"/>
    </source>
</evidence>
<dbReference type="EC" id="2.7.11.32" evidence="1"/>
<dbReference type="EC" id="2.7.4.27" evidence="1"/>
<dbReference type="EMBL" id="AL935263">
    <property type="protein sequence ID" value="CCC79227.1"/>
    <property type="molecule type" value="Genomic_DNA"/>
</dbReference>
<dbReference type="RefSeq" id="WP_003640684.1">
    <property type="nucleotide sequence ID" value="NC_004567.2"/>
</dbReference>
<dbReference type="RefSeq" id="YP_004889741.1">
    <property type="nucleotide sequence ID" value="NC_004567.2"/>
</dbReference>
<dbReference type="SMR" id="Q88VR4"/>
<dbReference type="STRING" id="220668.lp_1974"/>
<dbReference type="EnsemblBacteria" id="CCC79227">
    <property type="protein sequence ID" value="CCC79227"/>
    <property type="gene ID" value="lp_1974"/>
</dbReference>
<dbReference type="KEGG" id="lpl:lp_1974"/>
<dbReference type="PATRIC" id="fig|220668.9.peg.1667"/>
<dbReference type="eggNOG" id="COG1806">
    <property type="taxonomic scope" value="Bacteria"/>
</dbReference>
<dbReference type="HOGENOM" id="CLU_046206_2_1_9"/>
<dbReference type="OrthoDB" id="9782201at2"/>
<dbReference type="PhylomeDB" id="Q88VR4"/>
<dbReference type="Proteomes" id="UP000000432">
    <property type="component" value="Chromosome"/>
</dbReference>
<dbReference type="GO" id="GO:0043531">
    <property type="term" value="F:ADP binding"/>
    <property type="evidence" value="ECO:0007669"/>
    <property type="project" value="UniProtKB-UniRule"/>
</dbReference>
<dbReference type="GO" id="GO:0005524">
    <property type="term" value="F:ATP binding"/>
    <property type="evidence" value="ECO:0007669"/>
    <property type="project" value="InterPro"/>
</dbReference>
<dbReference type="GO" id="GO:0016776">
    <property type="term" value="F:phosphotransferase activity, phosphate group as acceptor"/>
    <property type="evidence" value="ECO:0007669"/>
    <property type="project" value="UniProtKB-UniRule"/>
</dbReference>
<dbReference type="GO" id="GO:0004674">
    <property type="term" value="F:protein serine/threonine kinase activity"/>
    <property type="evidence" value="ECO:0007669"/>
    <property type="project" value="UniProtKB-UniRule"/>
</dbReference>
<dbReference type="HAMAP" id="MF_00921">
    <property type="entry name" value="PDRP"/>
    <property type="match status" value="1"/>
</dbReference>
<dbReference type="InterPro" id="IPR005177">
    <property type="entry name" value="Kinase-pyrophosphorylase"/>
</dbReference>
<dbReference type="InterPro" id="IPR026565">
    <property type="entry name" value="PPDK_reg"/>
</dbReference>
<dbReference type="NCBIfam" id="NF003742">
    <property type="entry name" value="PRK05339.1"/>
    <property type="match status" value="1"/>
</dbReference>
<dbReference type="PANTHER" id="PTHR31756">
    <property type="entry name" value="PYRUVATE, PHOSPHATE DIKINASE REGULATORY PROTEIN 1, CHLOROPLASTIC"/>
    <property type="match status" value="1"/>
</dbReference>
<dbReference type="PANTHER" id="PTHR31756:SF3">
    <property type="entry name" value="PYRUVATE, PHOSPHATE DIKINASE REGULATORY PROTEIN 1, CHLOROPLASTIC"/>
    <property type="match status" value="1"/>
</dbReference>
<dbReference type="Pfam" id="PF03618">
    <property type="entry name" value="Kinase-PPPase"/>
    <property type="match status" value="1"/>
</dbReference>
<accession>Q88VR4</accession>
<accession>F9UPT8</accession>
<comment type="function">
    <text evidence="1">Bifunctional serine/threonine kinase and phosphorylase involved in the regulation of the pyruvate, phosphate dikinase (PPDK) by catalyzing its phosphorylation/dephosphorylation.</text>
</comment>
<comment type="catalytic activity">
    <reaction evidence="1">
        <text>N(tele)-phospho-L-histidyl/L-threonyl-[pyruvate, phosphate dikinase] + ADP = N(tele)-phospho-L-histidyl/O-phospho-L-threonyl-[pyruvate, phosphate dikinase] + AMP + H(+)</text>
        <dbReference type="Rhea" id="RHEA:43692"/>
        <dbReference type="Rhea" id="RHEA-COMP:10650"/>
        <dbReference type="Rhea" id="RHEA-COMP:10651"/>
        <dbReference type="ChEBI" id="CHEBI:15378"/>
        <dbReference type="ChEBI" id="CHEBI:30013"/>
        <dbReference type="ChEBI" id="CHEBI:61977"/>
        <dbReference type="ChEBI" id="CHEBI:83586"/>
        <dbReference type="ChEBI" id="CHEBI:456215"/>
        <dbReference type="ChEBI" id="CHEBI:456216"/>
        <dbReference type="EC" id="2.7.11.32"/>
    </reaction>
</comment>
<comment type="catalytic activity">
    <reaction evidence="1">
        <text>N(tele)-phospho-L-histidyl/O-phospho-L-threonyl-[pyruvate, phosphate dikinase] + phosphate + H(+) = N(tele)-phospho-L-histidyl/L-threonyl-[pyruvate, phosphate dikinase] + diphosphate</text>
        <dbReference type="Rhea" id="RHEA:43696"/>
        <dbReference type="Rhea" id="RHEA-COMP:10650"/>
        <dbReference type="Rhea" id="RHEA-COMP:10651"/>
        <dbReference type="ChEBI" id="CHEBI:15378"/>
        <dbReference type="ChEBI" id="CHEBI:30013"/>
        <dbReference type="ChEBI" id="CHEBI:33019"/>
        <dbReference type="ChEBI" id="CHEBI:43474"/>
        <dbReference type="ChEBI" id="CHEBI:61977"/>
        <dbReference type="ChEBI" id="CHEBI:83586"/>
        <dbReference type="EC" id="2.7.4.27"/>
    </reaction>
</comment>
<comment type="similarity">
    <text evidence="1">Belongs to the pyruvate, phosphate/water dikinase regulatory protein family. PDRP subfamily.</text>
</comment>
<organism>
    <name type="scientific">Lactiplantibacillus plantarum (strain ATCC BAA-793 / NCIMB 8826 / WCFS1)</name>
    <name type="common">Lactobacillus plantarum</name>
    <dbReference type="NCBI Taxonomy" id="220668"/>
    <lineage>
        <taxon>Bacteria</taxon>
        <taxon>Bacillati</taxon>
        <taxon>Bacillota</taxon>
        <taxon>Bacilli</taxon>
        <taxon>Lactobacillales</taxon>
        <taxon>Lactobacillaceae</taxon>
        <taxon>Lactiplantibacillus</taxon>
    </lineage>
</organism>